<organism>
    <name type="scientific">Escherichia coli (strain K12)</name>
    <dbReference type="NCBI Taxonomy" id="83333"/>
    <lineage>
        <taxon>Bacteria</taxon>
        <taxon>Pseudomonadati</taxon>
        <taxon>Pseudomonadota</taxon>
        <taxon>Gammaproteobacteria</taxon>
        <taxon>Enterobacterales</taxon>
        <taxon>Enterobacteriaceae</taxon>
        <taxon>Escherichia</taxon>
    </lineage>
</organism>
<keyword id="KW-0010">Activator</keyword>
<keyword id="KW-0238">DNA-binding</keyword>
<keyword id="KW-1185">Reference proteome</keyword>
<keyword id="KW-0804">Transcription</keyword>
<keyword id="KW-0805">Transcription regulation</keyword>
<reference key="1">
    <citation type="journal article" date="2001" name="Mol. Microbiol.">
        <title>MlrA, a novel regulator of curli (AgF) and extracellular matrix synthesis by Escherichia coli and Salmonella enterica serovar Typhimurium.</title>
        <authorList>
            <person name="Brown P.K."/>
            <person name="Dozois C.M."/>
            <person name="Nickerson C.A."/>
            <person name="Zuppardo A."/>
            <person name="Terlonge J."/>
            <person name="Curtiss R. III"/>
        </authorList>
    </citation>
    <scope>NUCLEOTIDE SEQUENCE [GENOMIC DNA]</scope>
    <scope>FUNCTION</scope>
    <scope>DISRUPTION PHENOTYPE</scope>
    <source>
        <strain>ATCC 33694 / HB101</strain>
        <strain>Chi7122</strain>
    </source>
</reference>
<reference key="2">
    <citation type="submission" date="1993-10" db="EMBL/GenBank/DDBJ databases">
        <title>Automated multiplex sequencing of the E.coli genome.</title>
        <authorList>
            <person name="Richterich P."/>
            <person name="Lakey N."/>
            <person name="Gryan G."/>
            <person name="Jaehn L."/>
            <person name="Mintz L."/>
            <person name="Robison K."/>
            <person name="Church G.M."/>
        </authorList>
    </citation>
    <scope>NUCLEOTIDE SEQUENCE [LARGE SCALE GENOMIC DNA]</scope>
    <source>
        <strain>K12 / BHB2600</strain>
    </source>
</reference>
<reference key="3">
    <citation type="journal article" date="1997" name="Science">
        <title>The complete genome sequence of Escherichia coli K-12.</title>
        <authorList>
            <person name="Blattner F.R."/>
            <person name="Plunkett G. III"/>
            <person name="Bloch C.A."/>
            <person name="Perna N.T."/>
            <person name="Burland V."/>
            <person name="Riley M."/>
            <person name="Collado-Vides J."/>
            <person name="Glasner J.D."/>
            <person name="Rode C.K."/>
            <person name="Mayhew G.F."/>
            <person name="Gregor J."/>
            <person name="Davis N.W."/>
            <person name="Kirkpatrick H.A."/>
            <person name="Goeden M.A."/>
            <person name="Rose D.J."/>
            <person name="Mau B."/>
            <person name="Shao Y."/>
        </authorList>
    </citation>
    <scope>NUCLEOTIDE SEQUENCE [LARGE SCALE GENOMIC DNA]</scope>
    <source>
        <strain>K12 / MG1655 / ATCC 47076</strain>
    </source>
</reference>
<reference key="4">
    <citation type="journal article" date="2006" name="Mol. Syst. Biol.">
        <title>Highly accurate genome sequences of Escherichia coli K-12 strains MG1655 and W3110.</title>
        <authorList>
            <person name="Hayashi K."/>
            <person name="Morooka N."/>
            <person name="Yamamoto Y."/>
            <person name="Fujita K."/>
            <person name="Isono K."/>
            <person name="Choi S."/>
            <person name="Ohtsubo E."/>
            <person name="Baba T."/>
            <person name="Wanner B.L."/>
            <person name="Mori H."/>
            <person name="Horiuchi T."/>
        </authorList>
    </citation>
    <scope>NUCLEOTIDE SEQUENCE [LARGE SCALE GENOMIC DNA]</scope>
    <source>
        <strain>K12 / W3110 / ATCC 27325 / DSM 5911</strain>
    </source>
</reference>
<reference key="5">
    <citation type="journal article" date="2010" name="FEMS Microbiol. Lett.">
        <title>Regulatory role of MlrA in transcription activation of csgD, the master regulator of biofilm formation in Escherichia coli.</title>
        <authorList>
            <person name="Ogasawara H."/>
            <person name="Yamamoto K."/>
            <person name="Ishihama A."/>
        </authorList>
    </citation>
    <scope>FUNCTION</scope>
    <scope>DNA-BINDING</scope>
</reference>
<reference key="6">
    <citation type="journal article" date="2013" name="EMBO J.">
        <title>The EAL domain protein YciR acts as a trigger enzyme in a c-di-GMP signalling cascade in E. coli biofilm control.</title>
        <authorList>
            <person name="Lindenberg S."/>
            <person name="Klauck G."/>
            <person name="Pesavento C."/>
            <person name="Klauck E."/>
            <person name="Hengge R."/>
        </authorList>
    </citation>
    <scope>FUNCTION</scope>
    <scope>ACTIVITY REGULATION</scope>
    <scope>INTERACTION WITH DGCM AND PDER</scope>
</reference>
<evidence type="ECO:0000255" key="1">
    <source>
        <dbReference type="PROSITE-ProRule" id="PRU00254"/>
    </source>
</evidence>
<evidence type="ECO:0000269" key="2">
    <source>
    </source>
</evidence>
<evidence type="ECO:0000269" key="3">
    <source>
    </source>
</evidence>
<evidence type="ECO:0000269" key="4">
    <source>
    </source>
</evidence>
<evidence type="ECO:0000303" key="5">
    <source>
    </source>
</evidence>
<evidence type="ECO:0000305" key="6"/>
<dbReference type="EMBL" id="AF288173">
    <property type="protein sequence ID" value="AAK84657.1"/>
    <property type="molecule type" value="Genomic_DNA"/>
</dbReference>
<dbReference type="EMBL" id="AF288174">
    <property type="protein sequence ID" value="AAK84658.1"/>
    <property type="molecule type" value="Genomic_DNA"/>
</dbReference>
<dbReference type="EMBL" id="U00007">
    <property type="protein sequence ID" value="AAA60490.1"/>
    <property type="molecule type" value="Genomic_DNA"/>
</dbReference>
<dbReference type="EMBL" id="U00096">
    <property type="protein sequence ID" value="AAC75188.1"/>
    <property type="molecule type" value="Genomic_DNA"/>
</dbReference>
<dbReference type="EMBL" id="AP009048">
    <property type="protein sequence ID" value="BAE76603.1"/>
    <property type="molecule type" value="Genomic_DNA"/>
</dbReference>
<dbReference type="PIR" id="F64980">
    <property type="entry name" value="F64980"/>
</dbReference>
<dbReference type="RefSeq" id="NP_416631.1">
    <property type="nucleotide sequence ID" value="NC_000913.3"/>
</dbReference>
<dbReference type="RefSeq" id="WP_001240401.1">
    <property type="nucleotide sequence ID" value="NZ_STEB01000002.1"/>
</dbReference>
<dbReference type="SMR" id="P33358"/>
<dbReference type="BioGRID" id="4260445">
    <property type="interactions" value="99"/>
</dbReference>
<dbReference type="BioGRID" id="853273">
    <property type="interactions" value="1"/>
</dbReference>
<dbReference type="FunCoup" id="P33358">
    <property type="interactions" value="84"/>
</dbReference>
<dbReference type="IntAct" id="P33358">
    <property type="interactions" value="9"/>
</dbReference>
<dbReference type="MINT" id="P33358"/>
<dbReference type="STRING" id="511145.b2127"/>
<dbReference type="jPOST" id="P33358"/>
<dbReference type="PaxDb" id="511145-b2127"/>
<dbReference type="EnsemblBacteria" id="AAC75188">
    <property type="protein sequence ID" value="AAC75188"/>
    <property type="gene ID" value="b2127"/>
</dbReference>
<dbReference type="GeneID" id="75206373"/>
<dbReference type="GeneID" id="949029"/>
<dbReference type="KEGG" id="ecj:JW2115"/>
<dbReference type="KEGG" id="eco:b2127"/>
<dbReference type="KEGG" id="ecoc:C3026_11925"/>
<dbReference type="PATRIC" id="fig|1411691.4.peg.118"/>
<dbReference type="EchoBASE" id="EB1946"/>
<dbReference type="eggNOG" id="COG0789">
    <property type="taxonomic scope" value="Bacteria"/>
</dbReference>
<dbReference type="HOGENOM" id="CLU_045945_0_1_6"/>
<dbReference type="InParanoid" id="P33358"/>
<dbReference type="OMA" id="EQGWRVD"/>
<dbReference type="OrthoDB" id="9800334at2"/>
<dbReference type="PhylomeDB" id="P33358"/>
<dbReference type="BioCyc" id="EcoCyc:EG12008-MONOMER"/>
<dbReference type="PRO" id="PR:P33358"/>
<dbReference type="Proteomes" id="UP000000625">
    <property type="component" value="Chromosome"/>
</dbReference>
<dbReference type="GO" id="GO:0003677">
    <property type="term" value="F:DNA binding"/>
    <property type="evidence" value="ECO:0007669"/>
    <property type="project" value="UniProtKB-KW"/>
</dbReference>
<dbReference type="GO" id="GO:0003700">
    <property type="term" value="F:DNA-binding transcription factor activity"/>
    <property type="evidence" value="ECO:0000314"/>
    <property type="project" value="EcoCyc"/>
</dbReference>
<dbReference type="GO" id="GO:0006355">
    <property type="term" value="P:regulation of DNA-templated transcription"/>
    <property type="evidence" value="ECO:0000318"/>
    <property type="project" value="GO_Central"/>
</dbReference>
<dbReference type="CDD" id="cd04763">
    <property type="entry name" value="HTH_MlrA-like"/>
    <property type="match status" value="1"/>
</dbReference>
<dbReference type="FunFam" id="1.10.1660.10:FF:000007">
    <property type="entry name" value="HTH-type transcriptional regulator MlrA"/>
    <property type="match status" value="1"/>
</dbReference>
<dbReference type="Gene3D" id="1.10.1660.10">
    <property type="match status" value="1"/>
</dbReference>
<dbReference type="InterPro" id="IPR009061">
    <property type="entry name" value="DNA-bd_dom_put_sf"/>
</dbReference>
<dbReference type="InterPro" id="IPR000551">
    <property type="entry name" value="MerR-type_HTH_dom"/>
</dbReference>
<dbReference type="InterPro" id="IPR047057">
    <property type="entry name" value="MerR_fam"/>
</dbReference>
<dbReference type="InterPro" id="IPR053987">
    <property type="entry name" value="MlrA-like_C"/>
</dbReference>
<dbReference type="InterPro" id="IPR053988">
    <property type="entry name" value="MlrA-like_helical"/>
</dbReference>
<dbReference type="InterPro" id="IPR048225">
    <property type="entry name" value="MlrA-like_HTH"/>
</dbReference>
<dbReference type="NCBIfam" id="NF011617">
    <property type="entry name" value="PRK15043.1"/>
    <property type="match status" value="1"/>
</dbReference>
<dbReference type="PANTHER" id="PTHR30204:SF67">
    <property type="entry name" value="HTH-TYPE TRANSCRIPTIONAL REGULATOR MLRA-RELATED"/>
    <property type="match status" value="1"/>
</dbReference>
<dbReference type="PANTHER" id="PTHR30204">
    <property type="entry name" value="REDOX-CYCLING DRUG-SENSING TRANSCRIPTIONAL ACTIVATOR SOXR"/>
    <property type="match status" value="1"/>
</dbReference>
<dbReference type="Pfam" id="PF13411">
    <property type="entry name" value="MerR_1"/>
    <property type="match status" value="1"/>
</dbReference>
<dbReference type="Pfam" id="PF22267">
    <property type="entry name" value="MlrA_C"/>
    <property type="match status" value="1"/>
</dbReference>
<dbReference type="Pfam" id="PF22270">
    <property type="entry name" value="MlrA_helical"/>
    <property type="match status" value="1"/>
</dbReference>
<dbReference type="SMART" id="SM00422">
    <property type="entry name" value="HTH_MERR"/>
    <property type="match status" value="1"/>
</dbReference>
<dbReference type="SUPFAM" id="SSF46955">
    <property type="entry name" value="Putative DNA-binding domain"/>
    <property type="match status" value="1"/>
</dbReference>
<dbReference type="PROSITE" id="PS00552">
    <property type="entry name" value="HTH_MERR_1"/>
    <property type="match status" value="1"/>
</dbReference>
<dbReference type="PROSITE" id="PS50937">
    <property type="entry name" value="HTH_MERR_2"/>
    <property type="match status" value="1"/>
</dbReference>
<feature type="chain" id="PRO_0000098144" description="HTH-type transcriptional regulator MlrA">
    <location>
        <begin position="1"/>
        <end position="243"/>
    </location>
</feature>
<feature type="domain" description="HTH merR-type" evidence="1">
    <location>
        <begin position="3"/>
        <end position="72"/>
    </location>
</feature>
<feature type="DNA-binding region" description="H-T-H motif" evidence="1">
    <location>
        <begin position="6"/>
        <end position="25"/>
    </location>
</feature>
<proteinExistence type="evidence at protein level"/>
<accession>P33358</accession>
<accession>Q2MAV3</accession>
<comment type="function">
    <text evidence="2 3 4">Activates transcription of csgD, the master regulator of biofilm formation, by binding to its promoter region (PubMed:11489123, PubMed:20874755). Also controls the transcription of cadC and ibaG (PubMed:20874755). Part of a signaling cascade that regulates curli biosynthesis. The cascade is composed of two c-di-GMP control modules, in which c-di-GMP controlled by the DgcE/PdeH pair (module I) regulates the activity of the DgcM/PdeR pair (module II), which in turn regulates activity of the transcription factor MlrA (PubMed:23708798).</text>
</comment>
<comment type="activity regulation">
    <text evidence="4">Activity is regulated by DgcM and PdeR.</text>
</comment>
<comment type="subunit">
    <text evidence="4">Interacts with DgcM and PdeR.</text>
</comment>
<comment type="interaction">
    <interactant intactId="EBI-1127668">
        <id>P33358</id>
    </interactant>
    <interactant intactId="EBI-544662">
        <id>P77302</id>
        <label>dgcM</label>
    </interactant>
    <organismsDiffer>false</organismsDiffer>
    <experiments>2</experiments>
</comment>
<comment type="interaction">
    <interactant intactId="EBI-1127668">
        <id>P33358</id>
    </interactant>
    <interactant intactId="EBI-548149">
        <id>P77334</id>
        <label>pdeR</label>
    </interactant>
    <organismsDiffer>false</organismsDiffer>
    <experiments>2</experiments>
</comment>
<comment type="disruption phenotype">
    <text evidence="2">Knockout mutant no longer produces curli, is mannose-resistant haemagglutination (MRHA) negative and produces smooth white colonies on Congo red agar.</text>
</comment>
<name>MLRA_ECOLI</name>
<gene>
    <name evidence="5" type="primary">mlrA</name>
    <name type="synonym">yehV</name>
    <name type="ordered locus">b2127</name>
    <name type="ordered locus">JW2115</name>
</gene>
<protein>
    <recommendedName>
        <fullName evidence="6">HTH-type transcriptional regulator MlrA</fullName>
    </recommendedName>
    <alternativeName>
        <fullName evidence="5">MerR-like regulator A</fullName>
    </alternativeName>
</protein>
<sequence length="243" mass="28046">MALYTIGEVALLCDINPVTLRAWQRRYGLLKPQRTDGGHRLFNDADIDRIREIKRWIDNGVQVSKVKMLLSNENVDVQNGWRDQQETLLTYLQSGNLHSLRTWIKERGQDYPAQTLTTHLFIPLRRRLQCQQPTLQALLAILDGVLINYIAICLASARKKQGKDALVVGWNIQDTTRLWLEGWIASQQGWRIDVLAHSLNQLRPELFEGRTLLVWCGENRTSAQQQQLTSWQEQGHDIFPLGI</sequence>